<reference key="1">
    <citation type="submission" date="2008-10" db="EMBL/GenBank/DDBJ databases">
        <title>Genome sequence of Bacillus anthracis str. CDC 684.</title>
        <authorList>
            <person name="Dodson R.J."/>
            <person name="Munk A.C."/>
            <person name="Brettin T."/>
            <person name="Bruce D."/>
            <person name="Detter C."/>
            <person name="Tapia R."/>
            <person name="Han C."/>
            <person name="Sutton G."/>
            <person name="Sims D."/>
        </authorList>
    </citation>
    <scope>NUCLEOTIDE SEQUENCE [LARGE SCALE GENOMIC DNA]</scope>
    <source>
        <strain>CDC 684 / NRRL 3495</strain>
    </source>
</reference>
<proteinExistence type="inferred from homology"/>
<protein>
    <recommendedName>
        <fullName evidence="1">Small, acid-soluble spore protein Tlp</fullName>
    </recommendedName>
</protein>
<name>TLP_BACAC</name>
<accession>C3L9C5</accession>
<sequence>MPNPDNRSDNAEKLQEMVQNTIDNFNEAKETAELSNEKDRSAIEAKNQRRLESIDSLKSEIKDES</sequence>
<keyword id="KW-0749">Sporulation</keyword>
<dbReference type="EMBL" id="CP001215">
    <property type="protein sequence ID" value="ACP12301.1"/>
    <property type="molecule type" value="Genomic_DNA"/>
</dbReference>
<dbReference type="RefSeq" id="WP_001133509.1">
    <property type="nucleotide sequence ID" value="NC_012581.1"/>
</dbReference>
<dbReference type="SMR" id="C3L9C5"/>
<dbReference type="GeneID" id="93007575"/>
<dbReference type="KEGG" id="bah:BAMEG_0965"/>
<dbReference type="HOGENOM" id="CLU_178266_1_0_9"/>
<dbReference type="GO" id="GO:0030436">
    <property type="term" value="P:asexual sporulation"/>
    <property type="evidence" value="ECO:0007669"/>
    <property type="project" value="UniProtKB-UniRule"/>
</dbReference>
<dbReference type="GO" id="GO:0030435">
    <property type="term" value="P:sporulation resulting in formation of a cellular spore"/>
    <property type="evidence" value="ECO:0007669"/>
    <property type="project" value="UniProtKB-KW"/>
</dbReference>
<dbReference type="HAMAP" id="MF_01506">
    <property type="entry name" value="Tlp"/>
    <property type="match status" value="1"/>
</dbReference>
<dbReference type="InterPro" id="IPR017524">
    <property type="entry name" value="SASP_thioredoxin-like"/>
</dbReference>
<dbReference type="NCBIfam" id="TIGR03090">
    <property type="entry name" value="SASP_tlp"/>
    <property type="match status" value="1"/>
</dbReference>
<dbReference type="Pfam" id="PF19824">
    <property type="entry name" value="Tlp"/>
    <property type="match status" value="1"/>
</dbReference>
<gene>
    <name evidence="1" type="primary">tlp</name>
    <name type="ordered locus">BAMEG_0965</name>
</gene>
<evidence type="ECO:0000255" key="1">
    <source>
        <dbReference type="HAMAP-Rule" id="MF_01506"/>
    </source>
</evidence>
<comment type="subcellular location">
    <subcellularLocation>
        <location evidence="1">Spore core</location>
    </subcellularLocation>
</comment>
<comment type="induction">
    <text evidence="1">Expressed only in the forespore compartment of sporulating cells.</text>
</comment>
<comment type="similarity">
    <text evidence="1">Belongs to the Tlp family.</text>
</comment>
<feature type="chain" id="PRO_1000185031" description="Small, acid-soluble spore protein Tlp">
    <location>
        <begin position="1"/>
        <end position="65"/>
    </location>
</feature>
<organism>
    <name type="scientific">Bacillus anthracis (strain CDC 684 / NRRL 3495)</name>
    <dbReference type="NCBI Taxonomy" id="568206"/>
    <lineage>
        <taxon>Bacteria</taxon>
        <taxon>Bacillati</taxon>
        <taxon>Bacillota</taxon>
        <taxon>Bacilli</taxon>
        <taxon>Bacillales</taxon>
        <taxon>Bacillaceae</taxon>
        <taxon>Bacillus</taxon>
        <taxon>Bacillus cereus group</taxon>
    </lineage>
</organism>